<dbReference type="EC" id="4.4.1.11" evidence="1"/>
<dbReference type="EC" id="4.4.1.2" evidence="1"/>
<dbReference type="EMBL" id="LT629739">
    <property type="protein sequence ID" value="SDT18406.1"/>
    <property type="molecule type" value="Genomic_DNA"/>
</dbReference>
<dbReference type="STRING" id="629680.SAMN04489751_4033"/>
<dbReference type="OrthoDB" id="9780685at2"/>
<dbReference type="Proteomes" id="UP000199700">
    <property type="component" value="Chromosome i"/>
</dbReference>
<dbReference type="GO" id="GO:0005737">
    <property type="term" value="C:cytoplasm"/>
    <property type="evidence" value="ECO:0007669"/>
    <property type="project" value="TreeGrafter"/>
</dbReference>
<dbReference type="GO" id="GO:0004123">
    <property type="term" value="F:cystathionine gamma-lyase activity"/>
    <property type="evidence" value="ECO:0007669"/>
    <property type="project" value="TreeGrafter"/>
</dbReference>
<dbReference type="GO" id="GO:0030170">
    <property type="term" value="F:pyridoxal phosphate binding"/>
    <property type="evidence" value="ECO:0007669"/>
    <property type="project" value="InterPro"/>
</dbReference>
<dbReference type="GO" id="GO:0019343">
    <property type="term" value="P:cysteine biosynthetic process via cystathionine"/>
    <property type="evidence" value="ECO:0007669"/>
    <property type="project" value="TreeGrafter"/>
</dbReference>
<dbReference type="GO" id="GO:0019346">
    <property type="term" value="P:transsulfuration"/>
    <property type="evidence" value="ECO:0007669"/>
    <property type="project" value="InterPro"/>
</dbReference>
<dbReference type="FunFam" id="3.40.640.10:FF:000046">
    <property type="entry name" value="Cystathionine gamma-lyase"/>
    <property type="match status" value="1"/>
</dbReference>
<dbReference type="Gene3D" id="3.90.1150.10">
    <property type="entry name" value="Aspartate Aminotransferase, domain 1"/>
    <property type="match status" value="1"/>
</dbReference>
<dbReference type="Gene3D" id="3.40.640.10">
    <property type="entry name" value="Type I PLP-dependent aspartate aminotransferase-like (Major domain)"/>
    <property type="match status" value="1"/>
</dbReference>
<dbReference type="InterPro" id="IPR000277">
    <property type="entry name" value="Cys/Met-Metab_PyrdxlP-dep_enz"/>
</dbReference>
<dbReference type="InterPro" id="IPR015424">
    <property type="entry name" value="PyrdxlP-dep_Trfase"/>
</dbReference>
<dbReference type="InterPro" id="IPR015421">
    <property type="entry name" value="PyrdxlP-dep_Trfase_major"/>
</dbReference>
<dbReference type="InterPro" id="IPR015422">
    <property type="entry name" value="PyrdxlP-dep_Trfase_small"/>
</dbReference>
<dbReference type="PANTHER" id="PTHR11808:SF85">
    <property type="entry name" value="CYSTATHIONINE GAMMA-LYASE-RELATED"/>
    <property type="match status" value="1"/>
</dbReference>
<dbReference type="PANTHER" id="PTHR11808">
    <property type="entry name" value="TRANS-SULFURATION ENZYME FAMILY MEMBER"/>
    <property type="match status" value="1"/>
</dbReference>
<dbReference type="Pfam" id="PF01053">
    <property type="entry name" value="Cys_Met_Meta_PP"/>
    <property type="match status" value="1"/>
</dbReference>
<dbReference type="PIRSF" id="PIRSF001434">
    <property type="entry name" value="CGS"/>
    <property type="match status" value="1"/>
</dbReference>
<dbReference type="SUPFAM" id="SSF53383">
    <property type="entry name" value="PLP-dependent transferases"/>
    <property type="match status" value="1"/>
</dbReference>
<name>MEGL_BRESA</name>
<feature type="chain" id="PRO_0000462006" description="L-methionine gamma-lyase">
    <location>
        <begin position="1"/>
        <end position="393"/>
    </location>
</feature>
<feature type="binding site" evidence="2">
    <location>
        <begin position="63"/>
        <end position="65"/>
    </location>
    <ligand>
        <name>pyridoxal 5'-phosphate</name>
        <dbReference type="ChEBI" id="CHEBI:597326"/>
        <note>ligand shared between dimeric partners</note>
    </ligand>
</feature>
<feature type="binding site" description="in other chain" evidence="2">
    <location>
        <begin position="93"/>
        <end position="94"/>
    </location>
    <ligand>
        <name>pyridoxal 5'-phosphate</name>
        <dbReference type="ChEBI" id="CHEBI:597326"/>
        <note>ligand shared between dimeric partners</note>
    </ligand>
</feature>
<feature type="binding site" evidence="2">
    <location>
        <position position="119"/>
    </location>
    <ligand>
        <name>L-homocysteine</name>
        <dbReference type="ChEBI" id="CHEBI:58199"/>
    </ligand>
</feature>
<feature type="binding site" description="in other chain" evidence="2">
    <location>
        <begin position="206"/>
        <end position="208"/>
    </location>
    <ligand>
        <name>pyridoxal 5'-phosphate</name>
        <dbReference type="ChEBI" id="CHEBI:597326"/>
        <note>ligand shared between dimeric partners</note>
    </ligand>
</feature>
<feature type="binding site" evidence="2">
    <location>
        <position position="367"/>
    </location>
    <ligand>
        <name>L-homocysteine</name>
        <dbReference type="ChEBI" id="CHEBI:58199"/>
    </ligand>
</feature>
<feature type="binding site" evidence="2">
    <location>
        <position position="367"/>
    </location>
    <ligand>
        <name>L-methionine</name>
        <dbReference type="ChEBI" id="CHEBI:57844"/>
    </ligand>
</feature>
<feature type="modified residue" description="N6-(pyridoxal phosphate)lysine" evidence="2">
    <location>
        <position position="209"/>
    </location>
</feature>
<proteinExistence type="inferred from homology"/>
<organism>
    <name type="scientific">Brevibacterium sandarakinum</name>
    <dbReference type="NCBI Taxonomy" id="629680"/>
    <lineage>
        <taxon>Bacteria</taxon>
        <taxon>Bacillati</taxon>
        <taxon>Actinomycetota</taxon>
        <taxon>Actinomycetes</taxon>
        <taxon>Micrococcales</taxon>
        <taxon>Brevibacteriaceae</taxon>
        <taxon>Brevibacterium</taxon>
    </lineage>
</organism>
<evidence type="ECO:0000250" key="1">
    <source>
        <dbReference type="UniProtKB" id="A0A2H1K3G9"/>
    </source>
</evidence>
<evidence type="ECO:0000250" key="2">
    <source>
        <dbReference type="UniProtKB" id="P13254"/>
    </source>
</evidence>
<evidence type="ECO:0000305" key="3"/>
<evidence type="ECO:0000312" key="4">
    <source>
        <dbReference type="EMBL" id="SDT18406.1"/>
    </source>
</evidence>
<accession>A0A1H1YBL2</accession>
<sequence length="393" mass="40691">MNSMHPETLMVHGGMDGLTEAGVHVPAIDLSTTNPVNDVATGGDSYEWLATGHALKDGDSAVYQRLWQPGVARFETALAELEHADEAVAFATGMAAMTAALLAAVNAGTPHIVAVRPLYGGSDHLLETGLLGTTVTWAKEAEIASAIQDDTGLVIVETPANPSLDLVDLDSVVAAAGTVPVLVDNTFCTPVLQQPIRHGAALVLHSATKYLGGHGDAMGGIIATNSDWAMRLRQVRAITGALLHPMGAYLLHRGLRTLAVRMRAAQTTAGELAERLAAHPAITAVHYPGLNGQDPRGLLGRQMSGGGAMIALELAGGFDAARSFVEHCSLVVHAVSLGGADTLIQHPASLTHRPVAATAKPGDGLIRLSVGLEHVDDLEDDLIAALDASRAAA</sequence>
<protein>
    <recommendedName>
        <fullName evidence="1">L-methionine gamma-lyase</fullName>
        <shortName evidence="1">MGL</shortName>
        <ecNumber evidence="1">4.4.1.11</ecNumber>
    </recommendedName>
    <alternativeName>
        <fullName evidence="1">Homocysteine desulfhydrase</fullName>
        <ecNumber evidence="1">4.4.1.2</ecNumber>
    </alternativeName>
</protein>
<comment type="function">
    <text evidence="1">Catalyzes the alpha,gamma-elimination of L-methionine to produce methanethiol, 2-oxobutanoate and ammonia. Is also able to catalyze the alpha,gamma-elimination of L-homocysteine.</text>
</comment>
<comment type="catalytic activity">
    <reaction evidence="1">
        <text>L-methionine + H2O = methanethiol + 2-oxobutanoate + NH4(+)</text>
        <dbReference type="Rhea" id="RHEA:23800"/>
        <dbReference type="ChEBI" id="CHEBI:15377"/>
        <dbReference type="ChEBI" id="CHEBI:16007"/>
        <dbReference type="ChEBI" id="CHEBI:16763"/>
        <dbReference type="ChEBI" id="CHEBI:28938"/>
        <dbReference type="ChEBI" id="CHEBI:57844"/>
        <dbReference type="EC" id="4.4.1.11"/>
    </reaction>
    <physiologicalReaction direction="left-to-right" evidence="1">
        <dbReference type="Rhea" id="RHEA:23801"/>
    </physiologicalReaction>
</comment>
<comment type="catalytic activity">
    <reaction evidence="1">
        <text>L-homocysteine + H2O = 2-oxobutanoate + hydrogen sulfide + NH4(+) + H(+)</text>
        <dbReference type="Rhea" id="RHEA:14501"/>
        <dbReference type="ChEBI" id="CHEBI:15377"/>
        <dbReference type="ChEBI" id="CHEBI:15378"/>
        <dbReference type="ChEBI" id="CHEBI:16763"/>
        <dbReference type="ChEBI" id="CHEBI:28938"/>
        <dbReference type="ChEBI" id="CHEBI:29919"/>
        <dbReference type="ChEBI" id="CHEBI:58199"/>
        <dbReference type="EC" id="4.4.1.2"/>
    </reaction>
    <physiologicalReaction direction="left-to-right" evidence="1">
        <dbReference type="Rhea" id="RHEA:14502"/>
    </physiologicalReaction>
</comment>
<comment type="cofactor">
    <cofactor evidence="1">
        <name>pyridoxal 5'-phosphate</name>
        <dbReference type="ChEBI" id="CHEBI:597326"/>
    </cofactor>
</comment>
<comment type="subunit">
    <text evidence="1">Homotetramer.</text>
</comment>
<comment type="similarity">
    <text evidence="3">Belongs to the trans-sulfuration enzymes family. L-methionine gamma-lyase subfamily.</text>
</comment>
<gene>
    <name evidence="4" type="ORF">SAMN04489751_4033</name>
</gene>
<keyword id="KW-0456">Lyase</keyword>
<keyword id="KW-0663">Pyridoxal phosphate</keyword>
<reference key="1">
    <citation type="submission" date="2016-10" db="EMBL/GenBank/DDBJ databases">
        <authorList>
            <person name="de Groot N.N."/>
        </authorList>
    </citation>
    <scope>NUCLEOTIDE SEQUENCE [LARGE SCALE GENOMIC DNA]</scope>
    <source>
        <strain>DSM 22082</strain>
    </source>
</reference>